<reference key="1">
    <citation type="journal article" date="2005" name="J. Bacteriol.">
        <title>Insights on evolution of virulence and resistance from the complete genome analysis of an early methicillin-resistant Staphylococcus aureus strain and a biofilm-producing methicillin-resistant Staphylococcus epidermidis strain.</title>
        <authorList>
            <person name="Gill S.R."/>
            <person name="Fouts D.E."/>
            <person name="Archer G.L."/>
            <person name="Mongodin E.F."/>
            <person name="DeBoy R.T."/>
            <person name="Ravel J."/>
            <person name="Paulsen I.T."/>
            <person name="Kolonay J.F."/>
            <person name="Brinkac L.M."/>
            <person name="Beanan M.J."/>
            <person name="Dodson R.J."/>
            <person name="Daugherty S.C."/>
            <person name="Madupu R."/>
            <person name="Angiuoli S.V."/>
            <person name="Durkin A.S."/>
            <person name="Haft D.H."/>
            <person name="Vamathevan J.J."/>
            <person name="Khouri H."/>
            <person name="Utterback T.R."/>
            <person name="Lee C."/>
            <person name="Dimitrov G."/>
            <person name="Jiang L."/>
            <person name="Qin H."/>
            <person name="Weidman J."/>
            <person name="Tran K."/>
            <person name="Kang K.H."/>
            <person name="Hance I.R."/>
            <person name="Nelson K.E."/>
            <person name="Fraser C.M."/>
        </authorList>
    </citation>
    <scope>NUCLEOTIDE SEQUENCE [LARGE SCALE GENOMIC DNA]</scope>
    <source>
        <strain>ATCC 35984 / DSM 28319 / BCRC 17069 / CCUG 31568 / BM 3577 / RP62A</strain>
    </source>
</reference>
<organism>
    <name type="scientific">Staphylococcus epidermidis (strain ATCC 35984 / DSM 28319 / BCRC 17069 / CCUG 31568 / BM 3577 / RP62A)</name>
    <dbReference type="NCBI Taxonomy" id="176279"/>
    <lineage>
        <taxon>Bacteria</taxon>
        <taxon>Bacillati</taxon>
        <taxon>Bacillota</taxon>
        <taxon>Bacilli</taxon>
        <taxon>Bacillales</taxon>
        <taxon>Staphylococcaceae</taxon>
        <taxon>Staphylococcus</taxon>
    </lineage>
</organism>
<proteinExistence type="inferred from homology"/>
<name>Y241_STAEQ</name>
<protein>
    <recommendedName>
        <fullName evidence="1">UPF0741 protein SERP0241</fullName>
    </recommendedName>
</protein>
<keyword id="KW-0175">Coiled coil</keyword>
<keyword id="KW-1185">Reference proteome</keyword>
<dbReference type="EMBL" id="CP000029">
    <property type="protein sequence ID" value="AAW53636.1"/>
    <property type="molecule type" value="Genomic_DNA"/>
</dbReference>
<dbReference type="RefSeq" id="WP_002438738.1">
    <property type="nucleotide sequence ID" value="NC_002976.3"/>
</dbReference>
<dbReference type="SMR" id="Q5HRF2"/>
<dbReference type="STRING" id="176279.SERP0241"/>
<dbReference type="KEGG" id="ser:SERP0241"/>
<dbReference type="eggNOG" id="COG4844">
    <property type="taxonomic scope" value="Bacteria"/>
</dbReference>
<dbReference type="HOGENOM" id="CLU_2156795_0_0_9"/>
<dbReference type="Proteomes" id="UP000000531">
    <property type="component" value="Chromosome"/>
</dbReference>
<dbReference type="HAMAP" id="MF_01863">
    <property type="entry name" value="UPF0741"/>
    <property type="match status" value="1"/>
</dbReference>
<dbReference type="InterPro" id="IPR009910">
    <property type="entry name" value="DUF1450"/>
</dbReference>
<dbReference type="InterPro" id="IPR020880">
    <property type="entry name" value="UPF0741"/>
</dbReference>
<dbReference type="Pfam" id="PF07293">
    <property type="entry name" value="DUF1450"/>
    <property type="match status" value="1"/>
</dbReference>
<evidence type="ECO:0000255" key="1">
    <source>
        <dbReference type="HAMAP-Rule" id="MF_01863"/>
    </source>
</evidence>
<evidence type="ECO:0000256" key="2">
    <source>
        <dbReference type="SAM" id="MobiDB-lite"/>
    </source>
</evidence>
<gene>
    <name type="ordered locus">SERP0241</name>
</gene>
<accession>Q5HRF2</accession>
<comment type="similarity">
    <text evidence="1">Belongs to the UPF0741 family.</text>
</comment>
<sequence>MKNKFLICDECQAVNLKSLKRKLEKLDPEAEIEIGCQSYCGPGRRKTFAFVNNRPLAALTEEELMEKVTKQLKKPRDPEEEERLRKRNEERKRRKEEQDRKLKEKLKKHKAEK</sequence>
<feature type="chain" id="PRO_0000372760" description="UPF0741 protein SERP0241">
    <location>
        <begin position="1"/>
        <end position="113"/>
    </location>
</feature>
<feature type="region of interest" description="Disordered" evidence="2">
    <location>
        <begin position="68"/>
        <end position="113"/>
    </location>
</feature>
<feature type="coiled-coil region" evidence="1">
    <location>
        <begin position="78"/>
        <end position="113"/>
    </location>
</feature>
<feature type="compositionally biased region" description="Basic and acidic residues" evidence="2">
    <location>
        <begin position="68"/>
        <end position="102"/>
    </location>
</feature>
<feature type="compositionally biased region" description="Basic residues" evidence="2">
    <location>
        <begin position="103"/>
        <end position="113"/>
    </location>
</feature>